<name>IP6K1_RAT</name>
<protein>
    <recommendedName>
        <fullName>Inositol hexakisphosphate kinase 1</fullName>
        <shortName>InsP6 kinase 1</shortName>
        <ecNumber>2.7.4.21</ecNumber>
    </recommendedName>
    <alternativeName>
        <fullName>Inositol hexaphosphate kinase 1</fullName>
    </alternativeName>
</protein>
<organism>
    <name type="scientific">Rattus norvegicus</name>
    <name type="common">Rat</name>
    <dbReference type="NCBI Taxonomy" id="10116"/>
    <lineage>
        <taxon>Eukaryota</taxon>
        <taxon>Metazoa</taxon>
        <taxon>Chordata</taxon>
        <taxon>Craniata</taxon>
        <taxon>Vertebrata</taxon>
        <taxon>Euteleostomi</taxon>
        <taxon>Mammalia</taxon>
        <taxon>Eutheria</taxon>
        <taxon>Euarchontoglires</taxon>
        <taxon>Glires</taxon>
        <taxon>Rodentia</taxon>
        <taxon>Myomorpha</taxon>
        <taxon>Muroidea</taxon>
        <taxon>Muridae</taxon>
        <taxon>Murinae</taxon>
        <taxon>Rattus</taxon>
    </lineage>
</organism>
<reference key="1">
    <citation type="submission" date="2000-09" db="EMBL/GenBank/DDBJ databases">
        <title>Cloning and sequencing of rat inositol hexakisphosphate kinase cDNA.</title>
        <authorList>
            <person name="Ohyama T."/>
            <person name="Matsuda K."/>
            <person name="Tachibana H."/>
            <person name="Horikawa Y."/>
            <person name="Sakata S.F."/>
            <person name="Tamaki N."/>
        </authorList>
    </citation>
    <scope>NUCLEOTIDE SEQUENCE [MRNA]</scope>
    <source>
        <strain>Wistar</strain>
        <tissue>Brain</tissue>
    </source>
</reference>
<reference key="2">
    <citation type="journal article" date="2004" name="Genome Res.">
        <title>The status, quality, and expansion of the NIH full-length cDNA project: the Mammalian Gene Collection (MGC).</title>
        <authorList>
            <consortium name="The MGC Project Team"/>
        </authorList>
    </citation>
    <scope>NUCLEOTIDE SEQUENCE [LARGE SCALE MRNA]</scope>
    <source>
        <tissue>Testis</tissue>
    </source>
</reference>
<gene>
    <name type="primary">Ip6k1</name>
    <name type="synonym">Ihpk1</name>
</gene>
<evidence type="ECO:0000250" key="1"/>
<evidence type="ECO:0000250" key="2">
    <source>
        <dbReference type="UniProtKB" id="Q92551"/>
    </source>
</evidence>
<evidence type="ECO:0000256" key="3">
    <source>
        <dbReference type="SAM" id="MobiDB-lite"/>
    </source>
</evidence>
<evidence type="ECO:0000305" key="4"/>
<dbReference type="EC" id="2.7.4.21"/>
<dbReference type="EMBL" id="AB049151">
    <property type="protein sequence ID" value="BAB13737.1"/>
    <property type="molecule type" value="mRNA"/>
</dbReference>
<dbReference type="EMBL" id="BC078702">
    <property type="protein sequence ID" value="AAH78702.1"/>
    <property type="molecule type" value="mRNA"/>
</dbReference>
<dbReference type="RefSeq" id="NP_445768.1">
    <property type="nucleotide sequence ID" value="NM_053316.2"/>
</dbReference>
<dbReference type="RefSeq" id="XP_006243901.1">
    <property type="nucleotide sequence ID" value="XM_006243839.1"/>
</dbReference>
<dbReference type="SMR" id="Q9ESM0"/>
<dbReference type="FunCoup" id="Q9ESM0">
    <property type="interactions" value="1701"/>
</dbReference>
<dbReference type="STRING" id="10116.ENSRNOP00000044935"/>
<dbReference type="PhosphoSitePlus" id="Q9ESM0"/>
<dbReference type="PaxDb" id="10116-ENSRNOP00000044935"/>
<dbReference type="GeneID" id="50560"/>
<dbReference type="KEGG" id="rno:50560"/>
<dbReference type="UCSC" id="RGD:71025">
    <property type="organism name" value="rat"/>
</dbReference>
<dbReference type="AGR" id="RGD:71025"/>
<dbReference type="CTD" id="9807"/>
<dbReference type="RGD" id="71025">
    <property type="gene designation" value="Ip6k1"/>
</dbReference>
<dbReference type="eggNOG" id="KOG1620">
    <property type="taxonomic scope" value="Eukaryota"/>
</dbReference>
<dbReference type="HOGENOM" id="CLU_014862_0_0_1"/>
<dbReference type="InParanoid" id="Q9ESM0"/>
<dbReference type="OrthoDB" id="2573163at2759"/>
<dbReference type="PhylomeDB" id="Q9ESM0"/>
<dbReference type="TreeFam" id="TF314066"/>
<dbReference type="Reactome" id="R-RNO-1855167">
    <property type="pathway name" value="Synthesis of pyrophosphates in the cytosol"/>
</dbReference>
<dbReference type="Reactome" id="R-RNO-1855191">
    <property type="pathway name" value="Synthesis of IPs in the nucleus"/>
</dbReference>
<dbReference type="PRO" id="PR:Q9ESM0"/>
<dbReference type="Proteomes" id="UP000002494">
    <property type="component" value="Chromosome 8"/>
</dbReference>
<dbReference type="Bgee" id="ENSRNOG00000019932">
    <property type="expression patterns" value="Expressed in testis and 18 other cell types or tissues"/>
</dbReference>
<dbReference type="GO" id="GO:0005737">
    <property type="term" value="C:cytoplasm"/>
    <property type="evidence" value="ECO:0000266"/>
    <property type="project" value="RGD"/>
</dbReference>
<dbReference type="GO" id="GO:0005829">
    <property type="term" value="C:cytosol"/>
    <property type="evidence" value="ECO:0007669"/>
    <property type="project" value="Ensembl"/>
</dbReference>
<dbReference type="GO" id="GO:0001650">
    <property type="term" value="C:fibrillar center"/>
    <property type="evidence" value="ECO:0007669"/>
    <property type="project" value="Ensembl"/>
</dbReference>
<dbReference type="GO" id="GO:0005654">
    <property type="term" value="C:nucleoplasm"/>
    <property type="evidence" value="ECO:0007669"/>
    <property type="project" value="Ensembl"/>
</dbReference>
<dbReference type="GO" id="GO:0005634">
    <property type="term" value="C:nucleus"/>
    <property type="evidence" value="ECO:0000266"/>
    <property type="project" value="RGD"/>
</dbReference>
<dbReference type="GO" id="GO:0005524">
    <property type="term" value="F:ATP binding"/>
    <property type="evidence" value="ECO:0007669"/>
    <property type="project" value="UniProtKB-KW"/>
</dbReference>
<dbReference type="GO" id="GO:0000832">
    <property type="term" value="F:inositol hexakisphosphate 5-kinase activity"/>
    <property type="evidence" value="ECO:0007669"/>
    <property type="project" value="RHEA"/>
</dbReference>
<dbReference type="GO" id="GO:0000828">
    <property type="term" value="F:inositol hexakisphosphate kinase activity"/>
    <property type="evidence" value="ECO:0000266"/>
    <property type="project" value="RGD"/>
</dbReference>
<dbReference type="GO" id="GO:0032958">
    <property type="term" value="P:inositol phosphate biosynthetic process"/>
    <property type="evidence" value="ECO:0000318"/>
    <property type="project" value="GO_Central"/>
</dbReference>
<dbReference type="GO" id="GO:0120163">
    <property type="term" value="P:negative regulation of cold-induced thermogenesis"/>
    <property type="evidence" value="ECO:0000250"/>
    <property type="project" value="YuBioLab"/>
</dbReference>
<dbReference type="GO" id="GO:0046854">
    <property type="term" value="P:phosphatidylinositol phosphate biosynthetic process"/>
    <property type="evidence" value="ECO:0000250"/>
    <property type="project" value="UniProtKB"/>
</dbReference>
<dbReference type="FunFam" id="3.30.470.160:FF:000002">
    <property type="entry name" value="Kinase"/>
    <property type="match status" value="1"/>
</dbReference>
<dbReference type="Gene3D" id="3.30.470.160">
    <property type="entry name" value="Inositol polyphosphate kinase"/>
    <property type="match status" value="1"/>
</dbReference>
<dbReference type="InterPro" id="IPR005522">
    <property type="entry name" value="IPK"/>
</dbReference>
<dbReference type="InterPro" id="IPR038286">
    <property type="entry name" value="IPK_sf"/>
</dbReference>
<dbReference type="PANTHER" id="PTHR12400:SF73">
    <property type="entry name" value="INOSITOL HEXAKISPHOSPHATE KINASE 1"/>
    <property type="match status" value="1"/>
</dbReference>
<dbReference type="PANTHER" id="PTHR12400">
    <property type="entry name" value="INOSITOL POLYPHOSPHATE KINASE"/>
    <property type="match status" value="1"/>
</dbReference>
<dbReference type="Pfam" id="PF03770">
    <property type="entry name" value="IPK"/>
    <property type="match status" value="1"/>
</dbReference>
<dbReference type="SUPFAM" id="SSF56104">
    <property type="entry name" value="SAICAR synthase-like"/>
    <property type="match status" value="1"/>
</dbReference>
<feature type="chain" id="PRO_0000066876" description="Inositol hexakisphosphate kinase 1">
    <location>
        <begin position="1"/>
        <end position="433"/>
    </location>
</feature>
<feature type="region of interest" description="Disordered" evidence="3">
    <location>
        <begin position="100"/>
        <end position="160"/>
    </location>
</feature>
<feature type="region of interest" description="Disordered" evidence="3">
    <location>
        <begin position="362"/>
        <end position="383"/>
    </location>
</feature>
<feature type="compositionally biased region" description="Basic residues" evidence="3">
    <location>
        <begin position="113"/>
        <end position="123"/>
    </location>
</feature>
<feature type="compositionally biased region" description="Polar residues" evidence="3">
    <location>
        <begin position="139"/>
        <end position="149"/>
    </location>
</feature>
<feature type="compositionally biased region" description="Basic and acidic residues" evidence="3">
    <location>
        <begin position="150"/>
        <end position="160"/>
    </location>
</feature>
<feature type="compositionally biased region" description="Polar residues" evidence="3">
    <location>
        <begin position="366"/>
        <end position="375"/>
    </location>
</feature>
<feature type="binding site" evidence="1">
    <location>
        <begin position="220"/>
        <end position="228"/>
    </location>
    <ligand>
        <name>substrate</name>
    </ligand>
</feature>
<feature type="modified residue" description="Phosphoserine" evidence="2">
    <location>
        <position position="151"/>
    </location>
</feature>
<proteinExistence type="evidence at transcript level"/>
<keyword id="KW-0067">ATP-binding</keyword>
<keyword id="KW-0963">Cytoplasm</keyword>
<keyword id="KW-0418">Kinase</keyword>
<keyword id="KW-0547">Nucleotide-binding</keyword>
<keyword id="KW-0539">Nucleus</keyword>
<keyword id="KW-0597">Phosphoprotein</keyword>
<keyword id="KW-1185">Reference proteome</keyword>
<keyword id="KW-0808">Transferase</keyword>
<comment type="function">
    <text evidence="1">Converts inositol hexakisphosphate (InsP6) to diphosphoinositol pentakisphosphate (InsP7/PP-InsP5). Converts 1,3,4,5,6-pentakisphosphate (InsP5) to PP-InsP4 (By similarity).</text>
</comment>
<comment type="catalytic activity">
    <reaction>
        <text>1D-myo-inositol hexakisphosphate + ATP = 5-diphospho-1D-myo-inositol 1,2,3,4,6-pentakisphosphate + ADP</text>
        <dbReference type="Rhea" id="RHEA:12793"/>
        <dbReference type="ChEBI" id="CHEBI:30616"/>
        <dbReference type="ChEBI" id="CHEBI:58130"/>
        <dbReference type="ChEBI" id="CHEBI:58628"/>
        <dbReference type="ChEBI" id="CHEBI:456216"/>
        <dbReference type="EC" id="2.7.4.21"/>
    </reaction>
</comment>
<comment type="catalytic activity">
    <reaction>
        <text>1-diphospho-1D-myo-inositol 2,3,4,5,6-pentakisphosphate + ATP + H(+) = 1,5-bis(diphospho)-1D-myo-inositol 2,3,4,6-tetrakisphosphate + ADP</text>
        <dbReference type="Rhea" id="RHEA:37467"/>
        <dbReference type="ChEBI" id="CHEBI:15378"/>
        <dbReference type="ChEBI" id="CHEBI:30616"/>
        <dbReference type="ChEBI" id="CHEBI:74946"/>
        <dbReference type="ChEBI" id="CHEBI:77983"/>
        <dbReference type="ChEBI" id="CHEBI:456216"/>
        <dbReference type="EC" id="2.7.4.21"/>
    </reaction>
</comment>
<comment type="subcellular location">
    <subcellularLocation>
        <location evidence="1">Cytoplasm</location>
    </subcellularLocation>
    <subcellularLocation>
        <location evidence="1">Nucleus</location>
    </subcellularLocation>
</comment>
<comment type="similarity">
    <text evidence="4">Belongs to the inositol phosphokinase (IPK) family.</text>
</comment>
<sequence>MCVCQTMEVGQYGKNASRAGDRGVLLEPFIHQVGGHSSMMRYDDHTVCKPLISREQRFYESLPPEMKEFTPEYKGVVSVCFEGDSDGYINLVAYPYVESETVEQDDTPEREQPRRKHSRRSLHRSGSGSDHKEEKASLSFETSESSQETKSPKVELHSHSDVPFQMLDSNSGLSSEKISYNPWSLRCHKQQLSRMRSESKDRKLYKFLLLENVVHHFKYPCVLDLKMGTRQHGDDASAEKAARQMRKCEQSTSASLGVRVCGMQVYQLDTGHYLCRNKYYGRGLSIEGFRNALYQYLHNGLDLRRDLFEPILSKLRGLKAVLERQASYRFYSSSLLVIYDGKECRSELRLKHVDMGLPEVPPLCGPSTSPSNTSLEAGPSSPPKVDVRMIDFAHSTFKGFRDDPTVHDGPDRGYVFGLENLISIMEQMRDENQ</sequence>
<accession>Q9ESM0</accession>